<reference key="1">
    <citation type="journal article" date="2008" name="J. Bacteriol.">
        <title>The pangenome structure of Escherichia coli: comparative genomic analysis of E. coli commensal and pathogenic isolates.</title>
        <authorList>
            <person name="Rasko D.A."/>
            <person name="Rosovitz M.J."/>
            <person name="Myers G.S.A."/>
            <person name="Mongodin E.F."/>
            <person name="Fricke W.F."/>
            <person name="Gajer P."/>
            <person name="Crabtree J."/>
            <person name="Sebaihia M."/>
            <person name="Thomson N.R."/>
            <person name="Chaudhuri R."/>
            <person name="Henderson I.R."/>
            <person name="Sperandio V."/>
            <person name="Ravel J."/>
        </authorList>
    </citation>
    <scope>NUCLEOTIDE SEQUENCE [LARGE SCALE GENOMIC DNA]</scope>
    <source>
        <strain>HS</strain>
    </source>
</reference>
<evidence type="ECO:0000255" key="1">
    <source>
        <dbReference type="HAMAP-Rule" id="MF_01318"/>
    </source>
</evidence>
<evidence type="ECO:0000305" key="2"/>
<feature type="chain" id="PRO_1000067529" description="Large ribosomal subunit protein uL1">
    <location>
        <begin position="1"/>
        <end position="234"/>
    </location>
</feature>
<name>RL1_ECOHS</name>
<gene>
    <name evidence="1" type="primary">rplA</name>
    <name type="ordered locus">EcHS_A4217</name>
</gene>
<dbReference type="EMBL" id="CP000802">
    <property type="protein sequence ID" value="ABV08387.1"/>
    <property type="molecule type" value="Genomic_DNA"/>
</dbReference>
<dbReference type="RefSeq" id="WP_001096684.1">
    <property type="nucleotide sequence ID" value="NC_009800.1"/>
</dbReference>
<dbReference type="SMR" id="A8A783"/>
<dbReference type="GeneID" id="93777910"/>
<dbReference type="KEGG" id="ecx:EcHS_A4217"/>
<dbReference type="HOGENOM" id="CLU_062853_0_0_6"/>
<dbReference type="GO" id="GO:0022625">
    <property type="term" value="C:cytosolic large ribosomal subunit"/>
    <property type="evidence" value="ECO:0007669"/>
    <property type="project" value="TreeGrafter"/>
</dbReference>
<dbReference type="GO" id="GO:0019843">
    <property type="term" value="F:rRNA binding"/>
    <property type="evidence" value="ECO:0007669"/>
    <property type="project" value="UniProtKB-UniRule"/>
</dbReference>
<dbReference type="GO" id="GO:0003735">
    <property type="term" value="F:structural constituent of ribosome"/>
    <property type="evidence" value="ECO:0007669"/>
    <property type="project" value="InterPro"/>
</dbReference>
<dbReference type="GO" id="GO:0000049">
    <property type="term" value="F:tRNA binding"/>
    <property type="evidence" value="ECO:0007669"/>
    <property type="project" value="UniProtKB-KW"/>
</dbReference>
<dbReference type="GO" id="GO:0006417">
    <property type="term" value="P:regulation of translation"/>
    <property type="evidence" value="ECO:0007669"/>
    <property type="project" value="UniProtKB-KW"/>
</dbReference>
<dbReference type="GO" id="GO:0006412">
    <property type="term" value="P:translation"/>
    <property type="evidence" value="ECO:0007669"/>
    <property type="project" value="UniProtKB-UniRule"/>
</dbReference>
<dbReference type="CDD" id="cd00403">
    <property type="entry name" value="Ribosomal_L1"/>
    <property type="match status" value="1"/>
</dbReference>
<dbReference type="FunFam" id="3.40.50.790:FF:000001">
    <property type="entry name" value="50S ribosomal protein L1"/>
    <property type="match status" value="1"/>
</dbReference>
<dbReference type="Gene3D" id="3.30.190.20">
    <property type="match status" value="1"/>
</dbReference>
<dbReference type="Gene3D" id="3.40.50.790">
    <property type="match status" value="1"/>
</dbReference>
<dbReference type="HAMAP" id="MF_01318_B">
    <property type="entry name" value="Ribosomal_uL1_B"/>
    <property type="match status" value="1"/>
</dbReference>
<dbReference type="InterPro" id="IPR005878">
    <property type="entry name" value="Ribosom_uL1_bac-type"/>
</dbReference>
<dbReference type="InterPro" id="IPR002143">
    <property type="entry name" value="Ribosomal_uL1"/>
</dbReference>
<dbReference type="InterPro" id="IPR023674">
    <property type="entry name" value="Ribosomal_uL1-like"/>
</dbReference>
<dbReference type="InterPro" id="IPR028364">
    <property type="entry name" value="Ribosomal_uL1/biogenesis"/>
</dbReference>
<dbReference type="InterPro" id="IPR016095">
    <property type="entry name" value="Ribosomal_uL1_3-a/b-sand"/>
</dbReference>
<dbReference type="InterPro" id="IPR023673">
    <property type="entry name" value="Ribosomal_uL1_CS"/>
</dbReference>
<dbReference type="NCBIfam" id="TIGR01169">
    <property type="entry name" value="rplA_bact"/>
    <property type="match status" value="1"/>
</dbReference>
<dbReference type="PANTHER" id="PTHR36427">
    <property type="entry name" value="54S RIBOSOMAL PROTEIN L1, MITOCHONDRIAL"/>
    <property type="match status" value="1"/>
</dbReference>
<dbReference type="PANTHER" id="PTHR36427:SF3">
    <property type="entry name" value="LARGE RIBOSOMAL SUBUNIT PROTEIN UL1M"/>
    <property type="match status" value="1"/>
</dbReference>
<dbReference type="Pfam" id="PF00687">
    <property type="entry name" value="Ribosomal_L1"/>
    <property type="match status" value="1"/>
</dbReference>
<dbReference type="PIRSF" id="PIRSF002155">
    <property type="entry name" value="Ribosomal_L1"/>
    <property type="match status" value="1"/>
</dbReference>
<dbReference type="SUPFAM" id="SSF56808">
    <property type="entry name" value="Ribosomal protein L1"/>
    <property type="match status" value="1"/>
</dbReference>
<dbReference type="PROSITE" id="PS01199">
    <property type="entry name" value="RIBOSOMAL_L1"/>
    <property type="match status" value="1"/>
</dbReference>
<proteinExistence type="inferred from homology"/>
<organism>
    <name type="scientific">Escherichia coli O9:H4 (strain HS)</name>
    <dbReference type="NCBI Taxonomy" id="331112"/>
    <lineage>
        <taxon>Bacteria</taxon>
        <taxon>Pseudomonadati</taxon>
        <taxon>Pseudomonadota</taxon>
        <taxon>Gammaproteobacteria</taxon>
        <taxon>Enterobacterales</taxon>
        <taxon>Enterobacteriaceae</taxon>
        <taxon>Escherichia</taxon>
    </lineage>
</organism>
<comment type="function">
    <text evidence="1">Binds directly to 23S rRNA. The L1 stalk is quite mobile in the ribosome, and is involved in E site tRNA release.</text>
</comment>
<comment type="function">
    <text evidence="1">Protein L1 is also a translational repressor protein, it controls the translation of the L11 operon by binding to its mRNA.</text>
</comment>
<comment type="subunit">
    <text evidence="1">Part of the 50S ribosomal subunit.</text>
</comment>
<comment type="similarity">
    <text evidence="1">Belongs to the universal ribosomal protein uL1 family.</text>
</comment>
<accession>A8A783</accession>
<protein>
    <recommendedName>
        <fullName evidence="1">Large ribosomal subunit protein uL1</fullName>
    </recommendedName>
    <alternativeName>
        <fullName evidence="2">50S ribosomal protein L1</fullName>
    </alternativeName>
</protein>
<sequence>MAKLTKRMRVIREKVDATKQYDINEAIALLKELATAKFVESVDVAVNLGIDARKSDQNVRGATVLPHGTGRSVRVAVFTQGANAEAAKAAGAELVGMEDLADQIKKGEMNFDVVIASPDAMRVVGQLGQVLGPRGLMPNPKVGTVTPNVAEAVKNAKAGQVRYRNDKNGIIHTTIGKVDFDADKLKENLEALLVALKKAKPTQAKGVYIKKVSISTTMGAGVAVDQAGLSASVN</sequence>
<keyword id="KW-0678">Repressor</keyword>
<keyword id="KW-0687">Ribonucleoprotein</keyword>
<keyword id="KW-0689">Ribosomal protein</keyword>
<keyword id="KW-0694">RNA-binding</keyword>
<keyword id="KW-0699">rRNA-binding</keyword>
<keyword id="KW-0810">Translation regulation</keyword>
<keyword id="KW-0820">tRNA-binding</keyword>